<proteinExistence type="evidence at protein level"/>
<gene>
    <name type="primary">SEC22A</name>
    <name type="synonym">SEC22L2</name>
</gene>
<keyword id="KW-0007">Acetylation</keyword>
<keyword id="KW-0175">Coiled coil</keyword>
<keyword id="KW-0256">Endoplasmic reticulum</keyword>
<keyword id="KW-0931">ER-Golgi transport</keyword>
<keyword id="KW-0472">Membrane</keyword>
<keyword id="KW-0597">Phosphoprotein</keyword>
<keyword id="KW-0653">Protein transport</keyword>
<keyword id="KW-1267">Proteomics identification</keyword>
<keyword id="KW-1185">Reference proteome</keyword>
<keyword id="KW-0812">Transmembrane</keyword>
<keyword id="KW-1133">Transmembrane helix</keyword>
<keyword id="KW-0813">Transport</keyword>
<sequence>MSMILSASVIRVRDGLPLSASTDYEQSTGMQECRKYFKMLSRKLAQLPDRCTLKTGHYNINFISSLGVSYMMLCTENYPNVLAFSFLDELQKEFITTYNMMKTNTAVRPYCFIEFDNFIQRTKQRYNNPRSLSTKINLSDMQTEIKLRPPYQISMCELGSANGVTSAFSVDCKGAGKISSAHQRLEPATLSGIVGFILSLLCGALNLIRGFHAIESLLQSDGDDFNYIIAFFLGTAACLYQCYLLVYYTGWRNVKSFLTFGLICLCNMYLYELRNLWQLFFHVTVGAFVTLQIWLRQAQGKAPDYDV</sequence>
<evidence type="ECO:0000250" key="1"/>
<evidence type="ECO:0000250" key="2">
    <source>
        <dbReference type="UniProtKB" id="Q642F4"/>
    </source>
</evidence>
<evidence type="ECO:0000255" key="3"/>
<evidence type="ECO:0000255" key="4">
    <source>
        <dbReference type="PROSITE-ProRule" id="PRU00231"/>
    </source>
</evidence>
<evidence type="ECO:0000305" key="5"/>
<evidence type="ECO:0000312" key="6">
    <source>
        <dbReference type="EMBL" id="AAD43013.1"/>
    </source>
</evidence>
<evidence type="ECO:0000312" key="7">
    <source>
        <dbReference type="EMBL" id="AAH07122.1"/>
    </source>
</evidence>
<evidence type="ECO:0007744" key="8">
    <source>
    </source>
</evidence>
<evidence type="ECO:0007744" key="9">
    <source>
    </source>
</evidence>
<feature type="initiator methionine" description="Removed" evidence="9">
    <location>
        <position position="1"/>
    </location>
</feature>
<feature type="chain" id="PRO_0000253043" description="Vesicle-trafficking protein SEC22a">
    <location>
        <begin position="2"/>
        <end position="307"/>
    </location>
</feature>
<feature type="topological domain" description="Cytoplasmic" evidence="3">
    <location>
        <begin position="2"/>
        <end position="187"/>
    </location>
</feature>
<feature type="transmembrane region" description="Helical" evidence="3">
    <location>
        <begin position="188"/>
        <end position="208"/>
    </location>
</feature>
<feature type="topological domain" description="Lumenal" evidence="3">
    <location>
        <begin position="209"/>
        <end position="226"/>
    </location>
</feature>
<feature type="transmembrane region" description="Helical" evidence="3">
    <location>
        <begin position="227"/>
        <end position="247"/>
    </location>
</feature>
<feature type="topological domain" description="Cytoplasmic" evidence="3">
    <location>
        <begin position="248"/>
        <end position="253"/>
    </location>
</feature>
<feature type="transmembrane region" description="Helical" evidence="3">
    <location>
        <begin position="254"/>
        <end position="271"/>
    </location>
</feature>
<feature type="topological domain" description="Lumenal" evidence="3">
    <location>
        <begin position="272"/>
        <end position="274"/>
    </location>
</feature>
<feature type="transmembrane region" description="Helical" evidence="3">
    <location>
        <begin position="275"/>
        <end position="295"/>
    </location>
</feature>
<feature type="topological domain" description="Cytoplasmic" evidence="3">
    <location>
        <begin position="296"/>
        <end position="307"/>
    </location>
</feature>
<feature type="domain" description="Longin" evidence="4">
    <location>
        <begin position="8"/>
        <end position="119"/>
    </location>
</feature>
<feature type="modified residue" description="N-acetylserine" evidence="9">
    <location>
        <position position="2"/>
    </location>
</feature>
<feature type="modified residue" description="Phosphoserine" evidence="8">
    <location>
        <position position="6"/>
    </location>
</feature>
<feature type="modified residue" description="Phosphoserine" evidence="8">
    <location>
        <position position="8"/>
    </location>
</feature>
<feature type="sequence conflict" description="In Ref. 1; AAD43013." evidence="5" ref="1">
    <original>N</original>
    <variation>K</variation>
    <location>
        <position position="61"/>
    </location>
</feature>
<feature type="sequence conflict" description="In Ref. 1; AAD43013." evidence="5" ref="1">
    <original>D</original>
    <variation>N</variation>
    <location>
        <position position="116"/>
    </location>
</feature>
<feature type="sequence conflict" description="In Ref. 1." evidence="5" ref="1">
    <original>L</original>
    <variation>V</variation>
    <location>
        <position position="295"/>
    </location>
</feature>
<feature type="sequence conflict" description="In Ref. 1." evidence="5" ref="1">
    <original>PD</original>
    <variation>SR</variation>
    <location>
        <begin position="303"/>
        <end position="304"/>
    </location>
</feature>
<protein>
    <recommendedName>
        <fullName>Vesicle-trafficking protein SEC22a</fullName>
    </recommendedName>
    <alternativeName>
        <fullName>SEC22 vesicle-trafficking protein homolog A</fullName>
    </alternativeName>
    <alternativeName>
        <fullName>SEC22 vesicle-trafficking protein-like 2</fullName>
    </alternativeName>
</protein>
<accession>Q96IW7</accession>
<accession>B2RE26</accession>
<accession>Q9Y682</accession>
<name>SC22A_HUMAN</name>
<reference evidence="6" key="1">
    <citation type="journal article" date="2000" name="Genome Res.">
        <title>Cloning and functional analysis of cDNAs with open reading frames for 300 previously undefined genes expressed in CD34+ hematopoietic stem/progenitor cells.</title>
        <authorList>
            <person name="Zhang Q.-H."/>
            <person name="Ye M."/>
            <person name="Wu X.-Y."/>
            <person name="Ren S.-X."/>
            <person name="Zhao M."/>
            <person name="Zhao C.-J."/>
            <person name="Fu G."/>
            <person name="Shen Y."/>
            <person name="Fan H.-Y."/>
            <person name="Lu G."/>
            <person name="Zhong M."/>
            <person name="Xu X.-R."/>
            <person name="Han Z.-G."/>
            <person name="Zhang J.-W."/>
            <person name="Tao J."/>
            <person name="Huang Q.-H."/>
            <person name="Zhou J."/>
            <person name="Hu G.-X."/>
            <person name="Gu J."/>
            <person name="Chen S.-J."/>
            <person name="Chen Z."/>
        </authorList>
    </citation>
    <scope>NUCLEOTIDE SEQUENCE [LARGE SCALE MRNA]</scope>
    <source>
        <tissue evidence="6">Umbilical cord blood</tissue>
    </source>
</reference>
<reference key="2">
    <citation type="journal article" date="2004" name="Nat. Genet.">
        <title>Complete sequencing and characterization of 21,243 full-length human cDNAs.</title>
        <authorList>
            <person name="Ota T."/>
            <person name="Suzuki Y."/>
            <person name="Nishikawa T."/>
            <person name="Otsuki T."/>
            <person name="Sugiyama T."/>
            <person name="Irie R."/>
            <person name="Wakamatsu A."/>
            <person name="Hayashi K."/>
            <person name="Sato H."/>
            <person name="Nagai K."/>
            <person name="Kimura K."/>
            <person name="Makita H."/>
            <person name="Sekine M."/>
            <person name="Obayashi M."/>
            <person name="Nishi T."/>
            <person name="Shibahara T."/>
            <person name="Tanaka T."/>
            <person name="Ishii S."/>
            <person name="Yamamoto J."/>
            <person name="Saito K."/>
            <person name="Kawai Y."/>
            <person name="Isono Y."/>
            <person name="Nakamura Y."/>
            <person name="Nagahari K."/>
            <person name="Murakami K."/>
            <person name="Yasuda T."/>
            <person name="Iwayanagi T."/>
            <person name="Wagatsuma M."/>
            <person name="Shiratori A."/>
            <person name="Sudo H."/>
            <person name="Hosoiri T."/>
            <person name="Kaku Y."/>
            <person name="Kodaira H."/>
            <person name="Kondo H."/>
            <person name="Sugawara M."/>
            <person name="Takahashi M."/>
            <person name="Kanda K."/>
            <person name="Yokoi T."/>
            <person name="Furuya T."/>
            <person name="Kikkawa E."/>
            <person name="Omura Y."/>
            <person name="Abe K."/>
            <person name="Kamihara K."/>
            <person name="Katsuta N."/>
            <person name="Sato K."/>
            <person name="Tanikawa M."/>
            <person name="Yamazaki M."/>
            <person name="Ninomiya K."/>
            <person name="Ishibashi T."/>
            <person name="Yamashita H."/>
            <person name="Murakawa K."/>
            <person name="Fujimori K."/>
            <person name="Tanai H."/>
            <person name="Kimata M."/>
            <person name="Watanabe M."/>
            <person name="Hiraoka S."/>
            <person name="Chiba Y."/>
            <person name="Ishida S."/>
            <person name="Ono Y."/>
            <person name="Takiguchi S."/>
            <person name="Watanabe S."/>
            <person name="Yosida M."/>
            <person name="Hotuta T."/>
            <person name="Kusano J."/>
            <person name="Kanehori K."/>
            <person name="Takahashi-Fujii A."/>
            <person name="Hara H."/>
            <person name="Tanase T.-O."/>
            <person name="Nomura Y."/>
            <person name="Togiya S."/>
            <person name="Komai F."/>
            <person name="Hara R."/>
            <person name="Takeuchi K."/>
            <person name="Arita M."/>
            <person name="Imose N."/>
            <person name="Musashino K."/>
            <person name="Yuuki H."/>
            <person name="Oshima A."/>
            <person name="Sasaki N."/>
            <person name="Aotsuka S."/>
            <person name="Yoshikawa Y."/>
            <person name="Matsunawa H."/>
            <person name="Ichihara T."/>
            <person name="Shiohata N."/>
            <person name="Sano S."/>
            <person name="Moriya S."/>
            <person name="Momiyama H."/>
            <person name="Satoh N."/>
            <person name="Takami S."/>
            <person name="Terashima Y."/>
            <person name="Suzuki O."/>
            <person name="Nakagawa S."/>
            <person name="Senoh A."/>
            <person name="Mizoguchi H."/>
            <person name="Goto Y."/>
            <person name="Shimizu F."/>
            <person name="Wakebe H."/>
            <person name="Hishigaki H."/>
            <person name="Watanabe T."/>
            <person name="Sugiyama A."/>
            <person name="Takemoto M."/>
            <person name="Kawakami B."/>
            <person name="Yamazaki M."/>
            <person name="Watanabe K."/>
            <person name="Kumagai A."/>
            <person name="Itakura S."/>
            <person name="Fukuzumi Y."/>
            <person name="Fujimori Y."/>
            <person name="Komiyama M."/>
            <person name="Tashiro H."/>
            <person name="Tanigami A."/>
            <person name="Fujiwara T."/>
            <person name="Ono T."/>
            <person name="Yamada K."/>
            <person name="Fujii Y."/>
            <person name="Ozaki K."/>
            <person name="Hirao M."/>
            <person name="Ohmori Y."/>
            <person name="Kawabata A."/>
            <person name="Hikiji T."/>
            <person name="Kobatake N."/>
            <person name="Inagaki H."/>
            <person name="Ikema Y."/>
            <person name="Okamoto S."/>
            <person name="Okitani R."/>
            <person name="Kawakami T."/>
            <person name="Noguchi S."/>
            <person name="Itoh T."/>
            <person name="Shigeta K."/>
            <person name="Senba T."/>
            <person name="Matsumura K."/>
            <person name="Nakajima Y."/>
            <person name="Mizuno T."/>
            <person name="Morinaga M."/>
            <person name="Sasaki M."/>
            <person name="Togashi T."/>
            <person name="Oyama M."/>
            <person name="Hata H."/>
            <person name="Watanabe M."/>
            <person name="Komatsu T."/>
            <person name="Mizushima-Sugano J."/>
            <person name="Satoh T."/>
            <person name="Shirai Y."/>
            <person name="Takahashi Y."/>
            <person name="Nakagawa K."/>
            <person name="Okumura K."/>
            <person name="Nagase T."/>
            <person name="Nomura N."/>
            <person name="Kikuchi H."/>
            <person name="Masuho Y."/>
            <person name="Yamashita R."/>
            <person name="Nakai K."/>
            <person name="Yada T."/>
            <person name="Nakamura Y."/>
            <person name="Ohara O."/>
            <person name="Isogai T."/>
            <person name="Sugano S."/>
        </authorList>
    </citation>
    <scope>NUCLEOTIDE SEQUENCE [LARGE SCALE MRNA]</scope>
    <source>
        <tissue>Trachea</tissue>
    </source>
</reference>
<reference key="3">
    <citation type="submission" date="2005-09" db="EMBL/GenBank/DDBJ databases">
        <authorList>
            <person name="Mural R.J."/>
            <person name="Istrail S."/>
            <person name="Sutton G.G."/>
            <person name="Florea L."/>
            <person name="Halpern A.L."/>
            <person name="Mobarry C.M."/>
            <person name="Lippert R."/>
            <person name="Walenz B."/>
            <person name="Shatkay H."/>
            <person name="Dew I."/>
            <person name="Miller J.R."/>
            <person name="Flanigan M.J."/>
            <person name="Edwards N.J."/>
            <person name="Bolanos R."/>
            <person name="Fasulo D."/>
            <person name="Halldorsson B.V."/>
            <person name="Hannenhalli S."/>
            <person name="Turner R."/>
            <person name="Yooseph S."/>
            <person name="Lu F."/>
            <person name="Nusskern D.R."/>
            <person name="Shue B.C."/>
            <person name="Zheng X.H."/>
            <person name="Zhong F."/>
            <person name="Delcher A.L."/>
            <person name="Huson D.H."/>
            <person name="Kravitz S.A."/>
            <person name="Mouchard L."/>
            <person name="Reinert K."/>
            <person name="Remington K.A."/>
            <person name="Clark A.G."/>
            <person name="Waterman M.S."/>
            <person name="Eichler E.E."/>
            <person name="Adams M.D."/>
            <person name="Hunkapiller M.W."/>
            <person name="Myers E.W."/>
            <person name="Venter J.C."/>
        </authorList>
    </citation>
    <scope>NUCLEOTIDE SEQUENCE [LARGE SCALE GENOMIC DNA]</scope>
</reference>
<reference evidence="7" key="4">
    <citation type="journal article" date="2004" name="Genome Res.">
        <title>The status, quality, and expansion of the NIH full-length cDNA project: the Mammalian Gene Collection (MGC).</title>
        <authorList>
            <consortium name="The MGC Project Team"/>
        </authorList>
    </citation>
    <scope>NUCLEOTIDE SEQUENCE [LARGE SCALE MRNA]</scope>
    <source>
        <tissue evidence="7">Cervix</tissue>
    </source>
</reference>
<reference key="5">
    <citation type="journal article" date="2008" name="Proc. Natl. Acad. Sci. U.S.A.">
        <title>A quantitative atlas of mitotic phosphorylation.</title>
        <authorList>
            <person name="Dephoure N."/>
            <person name="Zhou C."/>
            <person name="Villen J."/>
            <person name="Beausoleil S.A."/>
            <person name="Bakalarski C.E."/>
            <person name="Elledge S.J."/>
            <person name="Gygi S.P."/>
        </authorList>
    </citation>
    <scope>PHOSPHORYLATION [LARGE SCALE ANALYSIS] AT SER-6 AND SER-8</scope>
    <scope>IDENTIFICATION BY MASS SPECTROMETRY [LARGE SCALE ANALYSIS]</scope>
    <source>
        <tissue>Cervix carcinoma</tissue>
    </source>
</reference>
<reference key="6">
    <citation type="journal article" date="2012" name="Proc. Natl. Acad. Sci. U.S.A.">
        <title>N-terminal acetylome analyses and functional insights of the N-terminal acetyltransferase NatB.</title>
        <authorList>
            <person name="Van Damme P."/>
            <person name="Lasa M."/>
            <person name="Polevoda B."/>
            <person name="Gazquez C."/>
            <person name="Elosegui-Artola A."/>
            <person name="Kim D.S."/>
            <person name="De Juan-Pardo E."/>
            <person name="Demeyer K."/>
            <person name="Hole K."/>
            <person name="Larrea E."/>
            <person name="Timmerman E."/>
            <person name="Prieto J."/>
            <person name="Arnesen T."/>
            <person name="Sherman F."/>
            <person name="Gevaert K."/>
            <person name="Aldabe R."/>
        </authorList>
    </citation>
    <scope>ACETYLATION [LARGE SCALE ANALYSIS] AT SER-2</scope>
    <scope>CLEAVAGE OF INITIATOR METHIONINE [LARGE SCALE ANALYSIS]</scope>
    <scope>IDENTIFICATION BY MASS SPECTROMETRY [LARGE SCALE ANALYSIS]</scope>
</reference>
<dbReference type="EMBL" id="AF100749">
    <property type="protein sequence ID" value="AAD43013.1"/>
    <property type="status" value="ALT_FRAME"/>
    <property type="molecule type" value="mRNA"/>
</dbReference>
<dbReference type="EMBL" id="AK315771">
    <property type="protein sequence ID" value="BAG38123.1"/>
    <property type="molecule type" value="mRNA"/>
</dbReference>
<dbReference type="EMBL" id="CH471052">
    <property type="protein sequence ID" value="EAW79451.1"/>
    <property type="molecule type" value="Genomic_DNA"/>
</dbReference>
<dbReference type="EMBL" id="BC007122">
    <property type="protein sequence ID" value="AAH07122.1"/>
    <property type="molecule type" value="mRNA"/>
</dbReference>
<dbReference type="CCDS" id="CCDS3021.1"/>
<dbReference type="RefSeq" id="NP_036562.2">
    <property type="nucleotide sequence ID" value="NM_012430.4"/>
</dbReference>
<dbReference type="RefSeq" id="XP_011510975.1">
    <property type="nucleotide sequence ID" value="XM_011512673.4"/>
</dbReference>
<dbReference type="RefSeq" id="XP_011510977.1">
    <property type="nucleotide sequence ID" value="XM_011512675.4"/>
</dbReference>
<dbReference type="RefSeq" id="XP_011510978.1">
    <property type="nucleotide sequence ID" value="XM_011512676.4"/>
</dbReference>
<dbReference type="RefSeq" id="XP_047303913.1">
    <property type="nucleotide sequence ID" value="XM_047447957.1"/>
</dbReference>
<dbReference type="RefSeq" id="XP_047303914.1">
    <property type="nucleotide sequence ID" value="XM_047447958.1"/>
</dbReference>
<dbReference type="RefSeq" id="XP_054202124.1">
    <property type="nucleotide sequence ID" value="XM_054346149.1"/>
</dbReference>
<dbReference type="RefSeq" id="XP_054202125.1">
    <property type="nucleotide sequence ID" value="XM_054346150.1"/>
</dbReference>
<dbReference type="RefSeq" id="XP_054202126.1">
    <property type="nucleotide sequence ID" value="XM_054346151.1"/>
</dbReference>
<dbReference type="RefSeq" id="XP_054202127.1">
    <property type="nucleotide sequence ID" value="XM_054346152.1"/>
</dbReference>
<dbReference type="RefSeq" id="XP_054202128.1">
    <property type="nucleotide sequence ID" value="XM_054346153.1"/>
</dbReference>
<dbReference type="SMR" id="Q96IW7"/>
<dbReference type="BioGRID" id="117937">
    <property type="interactions" value="131"/>
</dbReference>
<dbReference type="FunCoup" id="Q96IW7">
    <property type="interactions" value="1599"/>
</dbReference>
<dbReference type="IntAct" id="Q96IW7">
    <property type="interactions" value="113"/>
</dbReference>
<dbReference type="MINT" id="Q96IW7"/>
<dbReference type="STRING" id="9606.ENSP00000310521"/>
<dbReference type="GlyGen" id="Q96IW7">
    <property type="glycosylation" value="1 site"/>
</dbReference>
<dbReference type="iPTMnet" id="Q96IW7"/>
<dbReference type="PhosphoSitePlus" id="Q96IW7"/>
<dbReference type="SwissPalm" id="Q96IW7"/>
<dbReference type="BioMuta" id="SEC22A"/>
<dbReference type="DMDM" id="74732111"/>
<dbReference type="jPOST" id="Q96IW7"/>
<dbReference type="MassIVE" id="Q96IW7"/>
<dbReference type="PaxDb" id="9606-ENSP00000310521"/>
<dbReference type="PeptideAtlas" id="Q96IW7"/>
<dbReference type="ProteomicsDB" id="76864"/>
<dbReference type="Pumba" id="Q96IW7"/>
<dbReference type="Antibodypedia" id="32946">
    <property type="antibodies" value="40 antibodies from 10 providers"/>
</dbReference>
<dbReference type="DNASU" id="26984"/>
<dbReference type="Ensembl" id="ENST00000309934.4">
    <property type="protein sequence ID" value="ENSP00000310521.4"/>
    <property type="gene ID" value="ENSG00000121542.12"/>
</dbReference>
<dbReference type="Ensembl" id="ENST00000492595.6">
    <property type="protein sequence ID" value="ENSP00000417972.1"/>
    <property type="gene ID" value="ENSG00000121542.12"/>
</dbReference>
<dbReference type="GeneID" id="26984"/>
<dbReference type="KEGG" id="hsa:26984"/>
<dbReference type="MANE-Select" id="ENST00000492595.6">
    <property type="protein sequence ID" value="ENSP00000417972.1"/>
    <property type="RefSeq nucleotide sequence ID" value="NM_012430.5"/>
    <property type="RefSeq protein sequence ID" value="NP_036562.2"/>
</dbReference>
<dbReference type="UCSC" id="uc003ege.4">
    <property type="organism name" value="human"/>
</dbReference>
<dbReference type="AGR" id="HGNC:20260"/>
<dbReference type="CTD" id="26984"/>
<dbReference type="DisGeNET" id="26984"/>
<dbReference type="GeneCards" id="SEC22A"/>
<dbReference type="HGNC" id="HGNC:20260">
    <property type="gene designation" value="SEC22A"/>
</dbReference>
<dbReference type="HPA" id="ENSG00000121542">
    <property type="expression patterns" value="Low tissue specificity"/>
</dbReference>
<dbReference type="MIM" id="612442">
    <property type="type" value="gene"/>
</dbReference>
<dbReference type="neXtProt" id="NX_Q96IW7"/>
<dbReference type="OpenTargets" id="ENSG00000121542"/>
<dbReference type="PharmGKB" id="PA134921956"/>
<dbReference type="VEuPathDB" id="HostDB:ENSG00000121542"/>
<dbReference type="eggNOG" id="KOG0862">
    <property type="taxonomic scope" value="Eukaryota"/>
</dbReference>
<dbReference type="GeneTree" id="ENSGT00940000158470"/>
<dbReference type="InParanoid" id="Q96IW7"/>
<dbReference type="OMA" id="NTGMQEC"/>
<dbReference type="OrthoDB" id="1719357at2759"/>
<dbReference type="PAN-GO" id="Q96IW7">
    <property type="GO annotations" value="2 GO annotations based on evolutionary models"/>
</dbReference>
<dbReference type="PhylomeDB" id="Q96IW7"/>
<dbReference type="TreeFam" id="TF105933"/>
<dbReference type="PathwayCommons" id="Q96IW7"/>
<dbReference type="Reactome" id="R-HSA-204005">
    <property type="pathway name" value="COPII-mediated vesicle transport"/>
</dbReference>
<dbReference type="SignaLink" id="Q96IW7"/>
<dbReference type="BioGRID-ORCS" id="26984">
    <property type="hits" value="21 hits in 1163 CRISPR screens"/>
</dbReference>
<dbReference type="ChiTaRS" id="SEC22A">
    <property type="organism name" value="human"/>
</dbReference>
<dbReference type="GeneWiki" id="SEC22A"/>
<dbReference type="GenomeRNAi" id="26984"/>
<dbReference type="Pharos" id="Q96IW7">
    <property type="development level" value="Tdark"/>
</dbReference>
<dbReference type="PRO" id="PR:Q96IW7"/>
<dbReference type="Proteomes" id="UP000005640">
    <property type="component" value="Chromosome 3"/>
</dbReference>
<dbReference type="RNAct" id="Q96IW7">
    <property type="molecule type" value="protein"/>
</dbReference>
<dbReference type="Bgee" id="ENSG00000121542">
    <property type="expression patterns" value="Expressed in secondary oocyte and 168 other cell types or tissues"/>
</dbReference>
<dbReference type="ExpressionAtlas" id="Q96IW7">
    <property type="expression patterns" value="baseline and differential"/>
</dbReference>
<dbReference type="GO" id="GO:0005789">
    <property type="term" value="C:endoplasmic reticulum membrane"/>
    <property type="evidence" value="ECO:0000304"/>
    <property type="project" value="ProtInc"/>
</dbReference>
<dbReference type="GO" id="GO:0005484">
    <property type="term" value="F:SNAP receptor activity"/>
    <property type="evidence" value="ECO:0000250"/>
    <property type="project" value="UniProtKB"/>
</dbReference>
<dbReference type="GO" id="GO:0006888">
    <property type="term" value="P:endoplasmic reticulum to Golgi vesicle-mediated transport"/>
    <property type="evidence" value="ECO:0000318"/>
    <property type="project" value="GO_Central"/>
</dbReference>
<dbReference type="GO" id="GO:0015031">
    <property type="term" value="P:protein transport"/>
    <property type="evidence" value="ECO:0007669"/>
    <property type="project" value="UniProtKB-KW"/>
</dbReference>
<dbReference type="CDD" id="cd14824">
    <property type="entry name" value="Longin"/>
    <property type="match status" value="1"/>
</dbReference>
<dbReference type="FunFam" id="3.30.450.50:FF:000010">
    <property type="entry name" value="vesicle-trafficking protein SEC22a isoform X2"/>
    <property type="match status" value="1"/>
</dbReference>
<dbReference type="Gene3D" id="3.30.450.50">
    <property type="entry name" value="Longin domain"/>
    <property type="match status" value="1"/>
</dbReference>
<dbReference type="InterPro" id="IPR011012">
    <property type="entry name" value="Longin-like_dom_sf"/>
</dbReference>
<dbReference type="InterPro" id="IPR010908">
    <property type="entry name" value="Longin_dom"/>
</dbReference>
<dbReference type="InterPro" id="IPR043546">
    <property type="entry name" value="Sec22a/c"/>
</dbReference>
<dbReference type="PANTHER" id="PTHR46258">
    <property type="entry name" value="LONGIN DOMAIN-CONTAINING PROTEIN"/>
    <property type="match status" value="1"/>
</dbReference>
<dbReference type="PANTHER" id="PTHR46258:SF3">
    <property type="entry name" value="VESICLE-TRAFFICKING PROTEIN SEC22A"/>
    <property type="match status" value="1"/>
</dbReference>
<dbReference type="Pfam" id="PF13774">
    <property type="entry name" value="Longin"/>
    <property type="match status" value="1"/>
</dbReference>
<dbReference type="SMART" id="SM01270">
    <property type="entry name" value="Longin"/>
    <property type="match status" value="1"/>
</dbReference>
<dbReference type="SUPFAM" id="SSF64356">
    <property type="entry name" value="SNARE-like"/>
    <property type="match status" value="1"/>
</dbReference>
<dbReference type="PROSITE" id="PS50859">
    <property type="entry name" value="LONGIN"/>
    <property type="match status" value="1"/>
</dbReference>
<comment type="function">
    <text evidence="2">May be involved in vesicle transport between the ER and the Golgi complex.</text>
</comment>
<comment type="interaction">
    <interactant intactId="EBI-8652744">
        <id>Q96IW7</id>
    </interactant>
    <interactant intactId="EBI-17979264">
        <id>Q86Y34</id>
        <label>ADGRG3</label>
    </interactant>
    <organismsDiffer>false</organismsDiffer>
    <experiments>3</experiments>
</comment>
<comment type="interaction">
    <interactant intactId="EBI-8652744">
        <id>Q96IW7</id>
    </interactant>
    <interactant intactId="EBI-13059134">
        <id>Q13520</id>
        <label>AQP6</label>
    </interactant>
    <organismsDiffer>false</organismsDiffer>
    <experiments>3</experiments>
</comment>
<comment type="interaction">
    <interactant intactId="EBI-8652744">
        <id>Q96IW7</id>
    </interactant>
    <interactant intactId="EBI-12808270">
        <id>P07307-3</id>
        <label>ASGR2</label>
    </interactant>
    <organismsDiffer>false</organismsDiffer>
    <experiments>3</experiments>
</comment>
<comment type="interaction">
    <interactant intactId="EBI-8652744">
        <id>Q96IW7</id>
    </interactant>
    <interactant intactId="EBI-2512037">
        <id>O75787</id>
        <label>ATP6AP2</label>
    </interactant>
    <organismsDiffer>false</organismsDiffer>
    <experiments>3</experiments>
</comment>
<comment type="interaction">
    <interactant intactId="EBI-8652744">
        <id>Q96IW7</id>
    </interactant>
    <interactant intactId="EBI-700794">
        <id>Q13323</id>
        <label>BIK</label>
    </interactant>
    <organismsDiffer>false</organismsDiffer>
    <experiments>3</experiments>
</comment>
<comment type="interaction">
    <interactant intactId="EBI-8652744">
        <id>Q96IW7</id>
    </interactant>
    <interactant intactId="EBI-749464">
        <id>Q12983</id>
        <label>BNIP3</label>
    </interactant>
    <organismsDiffer>false</organismsDiffer>
    <experiments>3</experiments>
</comment>
<comment type="interaction">
    <interactant intactId="EBI-8652744">
        <id>Q96IW7</id>
    </interactant>
    <interactant intactId="EBI-13381098">
        <id>Q8IYJ2-2</id>
        <label>C10orf67</label>
    </interactant>
    <organismsDiffer>false</organismsDiffer>
    <experiments>3</experiments>
</comment>
<comment type="interaction">
    <interactant intactId="EBI-8652744">
        <id>Q96IW7</id>
    </interactant>
    <interactant intactId="EBI-18041102">
        <id>Q6UWD8</id>
        <label>C16orf54</label>
    </interactant>
    <organismsDiffer>false</organismsDiffer>
    <experiments>3</experiments>
</comment>
<comment type="interaction">
    <interactant intactId="EBI-8652744">
        <id>Q96IW7</id>
    </interactant>
    <interactant intactId="EBI-12187137">
        <id>Q9BXU9</id>
        <label>CALN1</label>
    </interactant>
    <organismsDiffer>false</organismsDiffer>
    <experiments>3</experiments>
</comment>
<comment type="interaction">
    <interactant intactId="EBI-8652744">
        <id>Q96IW7</id>
    </interactant>
    <interactant intactId="EBI-2873235">
        <id>Q9UJ71</id>
        <label>CD207</label>
    </interactant>
    <organismsDiffer>false</organismsDiffer>
    <experiments>3</experiments>
</comment>
<comment type="interaction">
    <interactant intactId="EBI-8652744">
        <id>Q96IW7</id>
    </interactant>
    <interactant intactId="EBI-10320732">
        <id>Q9UGN4</id>
        <label>CD300A</label>
    </interactant>
    <organismsDiffer>false</organismsDiffer>
    <experiments>3</experiments>
</comment>
<comment type="interaction">
    <interactant intactId="EBI-8652744">
        <id>Q96IW7</id>
    </interactant>
    <interactant intactId="EBI-2836587">
        <id>P09564</id>
        <label>CD7</label>
    </interactant>
    <organismsDiffer>false</organismsDiffer>
    <experiments>3</experiments>
</comment>
<comment type="interaction">
    <interactant intactId="EBI-8652744">
        <id>Q96IW7</id>
    </interactant>
    <interactant intactId="EBI-12222807">
        <id>P04233-2</id>
        <label>CD74</label>
    </interactant>
    <organismsDiffer>false</organismsDiffer>
    <experiments>3</experiments>
</comment>
<comment type="interaction">
    <interactant intactId="EBI-8652744">
        <id>Q96IW7</id>
    </interactant>
    <interactant intactId="EBI-1045797">
        <id>Q8N5K1</id>
        <label>CISD2</label>
    </interactant>
    <organismsDiffer>false</organismsDiffer>
    <experiments>3</experiments>
</comment>
<comment type="interaction">
    <interactant intactId="EBI-8652744">
        <id>Q96IW7</id>
    </interactant>
    <interactant intactId="EBI-2873246">
        <id>Q8IUN9</id>
        <label>CLEC10A</label>
    </interactant>
    <organismsDiffer>false</organismsDiffer>
    <experiments>3</experiments>
</comment>
<comment type="interaction">
    <interactant intactId="EBI-8652744">
        <id>Q96IW7</id>
    </interactant>
    <interactant intactId="EBI-12811991">
        <id>Q2HXU8-2</id>
        <label>CLEC12B</label>
    </interactant>
    <organismsDiffer>false</organismsDiffer>
    <experiments>3</experiments>
</comment>
<comment type="interaction">
    <interactant intactId="EBI-8652744">
        <id>Q96IW7</id>
    </interactant>
    <interactant intactId="EBI-11749983">
        <id>Q9UHP7-3</id>
        <label>CLEC2D</label>
    </interactant>
    <organismsDiffer>false</organismsDiffer>
    <experiments>3</experiments>
</comment>
<comment type="interaction">
    <interactant intactId="EBI-8652744">
        <id>Q96IW7</id>
    </interactant>
    <interactant intactId="EBI-11989440">
        <id>Q9BXN2-6</id>
        <label>CLEC7A</label>
    </interactant>
    <organismsDiffer>false</organismsDiffer>
    <experiments>3</experiments>
</comment>
<comment type="interaction">
    <interactant intactId="EBI-8652744">
        <id>Q96IW7</id>
    </interactant>
    <interactant intactId="EBI-6942903">
        <id>Q96BA8</id>
        <label>CREB3L1</label>
    </interactant>
    <organismsDiffer>false</organismsDiffer>
    <experiments>3</experiments>
</comment>
<comment type="interaction">
    <interactant intactId="EBI-8652744">
        <id>Q96IW7</id>
    </interactant>
    <interactant intactId="EBI-8646596">
        <id>P49447</id>
        <label>CYB561</label>
    </interactant>
    <organismsDiffer>false</organismsDiffer>
    <experiments>3</experiments>
</comment>
<comment type="interaction">
    <interactant intactId="EBI-8652744">
        <id>Q96IW7</id>
    </interactant>
    <interactant intactId="EBI-8637742">
        <id>Q53TN4</id>
        <label>CYBRD1</label>
    </interactant>
    <organismsDiffer>false</organismsDiffer>
    <experiments>3</experiments>
</comment>
<comment type="interaction">
    <interactant intactId="EBI-8652744">
        <id>Q96IW7</id>
    </interactant>
    <interactant intactId="EBI-742054">
        <id>Q96D03</id>
        <label>DDIT4L</label>
    </interactant>
    <organismsDiffer>false</organismsDiffer>
    <experiments>3</experiments>
</comment>
<comment type="interaction">
    <interactant intactId="EBI-8652744">
        <id>Q96IW7</id>
    </interactant>
    <interactant intactId="EBI-517508">
        <id>Q9NR28</id>
        <label>DIABLO</label>
    </interactant>
    <organismsDiffer>false</organismsDiffer>
    <experiments>3</experiments>
</comment>
<comment type="interaction">
    <interactant intactId="EBI-8652744">
        <id>Q96IW7</id>
    </interactant>
    <interactant intactId="EBI-740376">
        <id>Q86UW9</id>
        <label>DTX2</label>
    </interactant>
    <organismsDiffer>false</organismsDiffer>
    <experiments>10</experiments>
</comment>
<comment type="interaction">
    <interactant intactId="EBI-8652744">
        <id>Q96IW7</id>
    </interactant>
    <interactant intactId="EBI-529425">
        <id>Q92838</id>
        <label>EDA</label>
    </interactant>
    <organismsDiffer>false</organismsDiffer>
    <experiments>7</experiments>
</comment>
<comment type="interaction">
    <interactant intactId="EBI-8652744">
        <id>Q96IW7</id>
    </interactant>
    <interactant intactId="EBI-18535450">
        <id>Q9GZR5</id>
        <label>ELOVL4</label>
    </interactant>
    <organismsDiffer>false</organismsDiffer>
    <experiments>3</experiments>
</comment>
<comment type="interaction">
    <interactant intactId="EBI-8652744">
        <id>Q96IW7</id>
    </interactant>
    <interactant intactId="EBI-359299">
        <id>O75477</id>
        <label>ERLIN1</label>
    </interactant>
    <organismsDiffer>false</organismsDiffer>
    <experiments>6</experiments>
</comment>
<comment type="interaction">
    <interactant intactId="EBI-8652744">
        <id>Q96IW7</id>
    </interactant>
    <interactant intactId="EBI-17973325">
        <id>P60508</id>
        <label>ERVFRD-1</label>
    </interactant>
    <organismsDiffer>false</organismsDiffer>
    <experiments>3</experiments>
</comment>
<comment type="interaction">
    <interactant intactId="EBI-8652744">
        <id>Q96IW7</id>
    </interactant>
    <interactant intactId="EBI-18636064">
        <id>Q8TBP5</id>
        <label>FAM174A</label>
    </interactant>
    <organismsDiffer>false</organismsDiffer>
    <experiments>3</experiments>
</comment>
<comment type="interaction">
    <interactant intactId="EBI-8652744">
        <id>Q96IW7</id>
    </interactant>
    <interactant intactId="EBI-18304435">
        <id>Q5JX71</id>
        <label>FAM209A</label>
    </interactant>
    <organismsDiffer>false</organismsDiffer>
    <experiments>3</experiments>
</comment>
<comment type="interaction">
    <interactant intactId="EBI-8652744">
        <id>Q96IW7</id>
    </interactant>
    <interactant intactId="EBI-743099">
        <id>Q969F0</id>
        <label>FATE1</label>
    </interactant>
    <organismsDiffer>false</organismsDiffer>
    <experiments>6</experiments>
</comment>
<comment type="interaction">
    <interactant intactId="EBI-8652744">
        <id>Q96IW7</id>
    </interactant>
    <interactant intactId="EBI-12887376">
        <id>Q96LL3</id>
        <label>FIMP</label>
    </interactant>
    <organismsDiffer>false</organismsDiffer>
    <experiments>3</experiments>
</comment>
<comment type="interaction">
    <interactant intactId="EBI-8652744">
        <id>Q96IW7</id>
    </interactant>
    <interactant intactId="EBI-12839380">
        <id>P21217</id>
        <label>FUT3</label>
    </interactant>
    <organismsDiffer>false</organismsDiffer>
    <experiments>3</experiments>
</comment>
<comment type="interaction">
    <interactant intactId="EBI-8652744">
        <id>Q96IW7</id>
    </interactant>
    <interactant intactId="EBI-9304251">
        <id>Q05329</id>
        <label>GAD2</label>
    </interactant>
    <organismsDiffer>false</organismsDiffer>
    <experiments>3</experiments>
</comment>
<comment type="interaction">
    <interactant intactId="EBI-8652744">
        <id>Q96IW7</id>
    </interactant>
    <interactant intactId="EBI-2868927">
        <id>Q6P531</id>
        <label>GGT6</label>
    </interactant>
    <organismsDiffer>false</organismsDiffer>
    <experiments>3</experiments>
</comment>
<comment type="interaction">
    <interactant intactId="EBI-8652744">
        <id>Q96IW7</id>
    </interactant>
    <interactant intactId="EBI-3909454">
        <id>O95377</id>
        <label>GJB5</label>
    </interactant>
    <organismsDiffer>false</organismsDiffer>
    <experiments>3</experiments>
</comment>
<comment type="interaction">
    <interactant intactId="EBI-8652744">
        <id>Q96IW7</id>
    </interactant>
    <interactant intactId="EBI-13345609">
        <id>O95452</id>
        <label>GJB6</label>
    </interactant>
    <organismsDiffer>false</organismsDiffer>
    <experiments>3</experiments>
</comment>
<comment type="interaction">
    <interactant intactId="EBI-8652744">
        <id>Q96IW7</id>
    </interactant>
    <interactant intactId="EBI-2927498">
        <id>O60883</id>
        <label>GPR37L1</label>
    </interactant>
    <organismsDiffer>false</organismsDiffer>
    <experiments>3</experiments>
</comment>
<comment type="interaction">
    <interactant intactId="EBI-8652744">
        <id>Q96IW7</id>
    </interactant>
    <interactant intactId="EBI-2832937">
        <id>Q96HH9</id>
        <label>GRAMD2B</label>
    </interactant>
    <organismsDiffer>false</organismsDiffer>
    <experiments>3</experiments>
</comment>
<comment type="interaction">
    <interactant intactId="EBI-8652744">
        <id>Q96IW7</id>
    </interactant>
    <interactant intactId="EBI-11472922">
        <id>Q8TDQ0</id>
        <label>HAVCR2</label>
    </interactant>
    <organismsDiffer>false</organismsDiffer>
    <experiments>3</experiments>
</comment>
<comment type="interaction">
    <interactant intactId="EBI-8652744">
        <id>Q96IW7</id>
    </interactant>
    <interactant intactId="EBI-2801937">
        <id>Q9UBK5</id>
        <label>HCST</label>
    </interactant>
    <organismsDiffer>false</organismsDiffer>
    <experiments>3</experiments>
</comment>
<comment type="interaction">
    <interactant intactId="EBI-8652744">
        <id>Q96IW7</id>
    </interactant>
    <interactant intactId="EBI-1052304">
        <id>Q8NBQ5</id>
        <label>HSD17B11</label>
    </interactant>
    <organismsDiffer>false</organismsDiffer>
    <experiments>3</experiments>
</comment>
<comment type="interaction">
    <interactant intactId="EBI-8652744">
        <id>Q96IW7</id>
    </interactant>
    <interactant intactId="EBI-725421">
        <id>P32942</id>
        <label>ICAM3</label>
    </interactant>
    <organismsDiffer>false</organismsDiffer>
    <experiments>3</experiments>
</comment>
<comment type="interaction">
    <interactant intactId="EBI-8652744">
        <id>Q96IW7</id>
    </interactant>
    <interactant intactId="EBI-703457">
        <id>P63252</id>
        <label>KCNJ2</label>
    </interactant>
    <organismsDiffer>false</organismsDiffer>
    <experiments>3</experiments>
</comment>
<comment type="interaction">
    <interactant intactId="EBI-8652744">
        <id>Q96IW7</id>
    </interactant>
    <interactant intactId="EBI-7055862">
        <id>Q96B96</id>
        <label>LDAF1</label>
    </interactant>
    <organismsDiffer>false</organismsDiffer>
    <experiments>3</experiments>
</comment>
<comment type="interaction">
    <interactant intactId="EBI-8652744">
        <id>Q96IW7</id>
    </interactant>
    <interactant intactId="EBI-10173166">
        <id>Q5T700</id>
        <label>LDLRAD1</label>
    </interactant>
    <organismsDiffer>false</organismsDiffer>
    <experiments>3</experiments>
</comment>
<comment type="interaction">
    <interactant intactId="EBI-8652744">
        <id>Q96IW7</id>
    </interactant>
    <interactant intactId="EBI-2820517">
        <id>Q8TAF8</id>
        <label>LHFPL5</label>
    </interactant>
    <organismsDiffer>false</organismsDiffer>
    <experiments>3</experiments>
</comment>
<comment type="interaction">
    <interactant intactId="EBI-8652744">
        <id>Q96IW7</id>
    </interactant>
    <interactant intactId="EBI-2876949">
        <id>P43657</id>
        <label>LPAR6</label>
    </interactant>
    <organismsDiffer>false</organismsDiffer>
    <experiments>3</experiments>
</comment>
<comment type="interaction">
    <interactant intactId="EBI-8652744">
        <id>Q96IW7</id>
    </interactant>
    <interactant intactId="EBI-11304917">
        <id>Q8N386</id>
        <label>LRRC25</label>
    </interactant>
    <organismsDiffer>false</organismsDiffer>
    <experiments>3</experiments>
</comment>
<comment type="interaction">
    <interactant intactId="EBI-8652744">
        <id>Q96IW7</id>
    </interactant>
    <interactant intactId="EBI-10264855">
        <id>Q8N112</id>
        <label>LSMEM2</label>
    </interactant>
    <organismsDiffer>false</organismsDiffer>
    <experiments>3</experiments>
</comment>
<comment type="interaction">
    <interactant intactId="EBI-8652744">
        <id>Q96IW7</id>
    </interactant>
    <interactant intactId="EBI-721209">
        <id>Q9GZU1</id>
        <label>MCOLN1</label>
    </interactant>
    <organismsDiffer>false</organismsDiffer>
    <experiments>3</experiments>
</comment>
<comment type="interaction">
    <interactant intactId="EBI-8652744">
        <id>Q96IW7</id>
    </interactant>
    <interactant intactId="EBI-11956541">
        <id>Q9GZY8-5</id>
        <label>MFF</label>
    </interactant>
    <organismsDiffer>false</organismsDiffer>
    <experiments>3</experiments>
</comment>
<comment type="interaction">
    <interactant intactId="EBI-8652744">
        <id>Q96IW7</id>
    </interactant>
    <interactant intactId="EBI-11324706">
        <id>Q99735</id>
        <label>MGST2</label>
    </interactant>
    <organismsDiffer>false</organismsDiffer>
    <experiments>3</experiments>
</comment>
<comment type="interaction">
    <interactant intactId="EBI-8652744">
        <id>Q96IW7</id>
    </interactant>
    <interactant intactId="EBI-11977115">
        <id>Q9UPX6</id>
        <label>MINAR1</label>
    </interactant>
    <organismsDiffer>false</organismsDiffer>
    <experiments>3</experiments>
</comment>
<comment type="interaction">
    <interactant intactId="EBI-8652744">
        <id>Q96IW7</id>
    </interactant>
    <interactant intactId="EBI-12839612">
        <id>Q96JA4</id>
        <label>MS4A14</label>
    </interactant>
    <organismsDiffer>false</organismsDiffer>
    <experiments>3</experiments>
</comment>
<comment type="interaction">
    <interactant intactId="EBI-8652744">
        <id>Q96IW7</id>
    </interactant>
    <interactant intactId="EBI-12806656">
        <id>Q96HJ5</id>
        <label>MS4A3</label>
    </interactant>
    <organismsDiffer>false</organismsDiffer>
    <experiments>3</experiments>
</comment>
<comment type="interaction">
    <interactant intactId="EBI-8652744">
        <id>Q96IW7</id>
    </interactant>
    <interactant intactId="EBI-12820341">
        <id>Q96JQ5</id>
        <label>MS4A4A</label>
    </interactant>
    <organismsDiffer>false</organismsDiffer>
    <experiments>5</experiments>
</comment>
<comment type="interaction">
    <interactant intactId="EBI-8652744">
        <id>Q96IW7</id>
    </interactant>
    <interactant intactId="EBI-1776976">
        <id>P21757</id>
        <label>MSR1</label>
    </interactant>
    <organismsDiffer>false</organismsDiffer>
    <experiments>7</experiments>
</comment>
<comment type="interaction">
    <interactant intactId="EBI-8652744">
        <id>Q96IW7</id>
    </interactant>
    <interactant intactId="EBI-12807478">
        <id>P35372-10</id>
        <label>OPRM1</label>
    </interactant>
    <organismsDiffer>false</organismsDiffer>
    <experiments>3</experiments>
</comment>
<comment type="interaction">
    <interactant intactId="EBI-8652744">
        <id>Q96IW7</id>
    </interactant>
    <interactant intactId="EBI-4319734">
        <id>Q9H813</id>
        <label>PACC1</label>
    </interactant>
    <organismsDiffer>false</organismsDiffer>
    <experiments>3</experiments>
</comment>
<comment type="interaction">
    <interactant intactId="EBI-8652744">
        <id>Q96IW7</id>
    </interactant>
    <interactant intactId="EBI-594836">
        <id>O00623</id>
        <label>PEX12</label>
    </interactant>
    <organismsDiffer>false</organismsDiffer>
    <experiments>3</experiments>
</comment>
<comment type="interaction">
    <interactant intactId="EBI-8652744">
        <id>Q96IW7</id>
    </interactant>
    <interactant intactId="EBI-354213">
        <id>P35232</id>
        <label>PHB1</label>
    </interactant>
    <organismsDiffer>false</organismsDiffer>
    <experiments>3</experiments>
</comment>
<comment type="interaction">
    <interactant intactId="EBI-8652744">
        <id>Q96IW7</id>
    </interactant>
    <interactant intactId="EBI-11161398">
        <id>O14684</id>
        <label>PTGES</label>
    </interactant>
    <organismsDiffer>false</organismsDiffer>
    <experiments>3</experiments>
</comment>
<comment type="interaction">
    <interactant intactId="EBI-8652744">
        <id>Q96IW7</id>
    </interactant>
    <interactant intactId="EBI-12816371">
        <id>Q8TDF6-2</id>
        <label>RASGRP4</label>
    </interactant>
    <organismsDiffer>false</organismsDiffer>
    <experiments>3</experiments>
</comment>
<comment type="interaction">
    <interactant intactId="EBI-8652744">
        <id>Q96IW7</id>
    </interactant>
    <interactant intactId="EBI-10192441">
        <id>Q86VR2</id>
        <label>RETREG3</label>
    </interactant>
    <organismsDiffer>false</organismsDiffer>
    <experiments>5</experiments>
</comment>
<comment type="interaction">
    <interactant intactId="EBI-8652744">
        <id>Q96IW7</id>
    </interactant>
    <interactant intactId="EBI-12072024">
        <id>Q5EBL4-3</id>
        <label>RILPL1</label>
    </interactant>
    <organismsDiffer>false</organismsDiffer>
    <experiments>3</experiments>
</comment>
<comment type="interaction">
    <interactant intactId="EBI-8652744">
        <id>Q96IW7</id>
    </interactant>
    <interactant intactId="EBI-18397230">
        <id>Q6P5S7</id>
        <label>RNASEK</label>
    </interactant>
    <organismsDiffer>false</organismsDiffer>
    <experiments>3</experiments>
</comment>
<comment type="interaction">
    <interactant intactId="EBI-8652744">
        <id>Q96IW7</id>
    </interactant>
    <interactant intactId="EBI-2340657">
        <id>P50876</id>
        <label>RNF144A</label>
    </interactant>
    <organismsDiffer>false</organismsDiffer>
    <experiments>3</experiments>
</comment>
<comment type="interaction">
    <interactant intactId="EBI-8652744">
        <id>Q96IW7</id>
    </interactant>
    <interactant intactId="EBI-2466594">
        <id>Q6ZMZ0</id>
        <label>RNF19B</label>
    </interactant>
    <organismsDiffer>false</organismsDiffer>
    <experiments>3</experiments>
</comment>
<comment type="interaction">
    <interactant intactId="EBI-8652744">
        <id>Q96IW7</id>
    </interactant>
    <interactant intactId="EBI-348482">
        <id>Q99942</id>
        <label>RNF5</label>
    </interactant>
    <organismsDiffer>false</organismsDiffer>
    <experiments>3</experiments>
</comment>
<comment type="interaction">
    <interactant intactId="EBI-8652744">
        <id>Q96IW7</id>
    </interactant>
    <interactant intactId="EBI-3920694">
        <id>Q9NR31</id>
        <label>SAR1A</label>
    </interactant>
    <organismsDiffer>false</organismsDiffer>
    <experiments>3</experiments>
</comment>
<comment type="interaction">
    <interactant intactId="EBI-8652744">
        <id>Q96IW7</id>
    </interactant>
    <interactant intactId="EBI-17247926">
        <id>Q9NY72</id>
        <label>SCN3B</label>
    </interactant>
    <organismsDiffer>false</organismsDiffer>
    <experiments>3</experiments>
</comment>
<comment type="interaction">
    <interactant intactId="EBI-8652744">
        <id>Q96IW7</id>
    </interactant>
    <interactant intactId="EBI-713250">
        <id>Q9NX18</id>
        <label>SDHAF2</label>
    </interactant>
    <organismsDiffer>false</organismsDiffer>
    <experiments>3</experiments>
</comment>
<comment type="interaction">
    <interactant intactId="EBI-8652744">
        <id>Q96IW7</id>
    </interactant>
    <interactant intactId="EBI-10197617">
        <id>P11686</id>
        <label>SFTPC</label>
    </interactant>
    <organismsDiffer>false</organismsDiffer>
    <experiments>6</experiments>
</comment>
<comment type="interaction">
    <interactant intactId="EBI-8652744">
        <id>Q96IW7</id>
    </interactant>
    <interactant intactId="EBI-1573290">
        <id>Q15849</id>
        <label>SLC14A2</label>
    </interactant>
    <organismsDiffer>false</organismsDiffer>
    <experiments>3</experiments>
</comment>
<comment type="interaction">
    <interactant intactId="EBI-8652744">
        <id>Q96IW7</id>
    </interactant>
    <interactant intactId="EBI-8644112">
        <id>Q9BRI3</id>
        <label>SLC30A2</label>
    </interactant>
    <organismsDiffer>false</organismsDiffer>
    <experiments>3</experiments>
</comment>
<comment type="interaction">
    <interactant intactId="EBI-8652744">
        <id>Q96IW7</id>
    </interactant>
    <interactant intactId="EBI-17295964">
        <id>Q9NQQ7-3</id>
        <label>SLC35C2</label>
    </interactant>
    <organismsDiffer>false</organismsDiffer>
    <experiments>3</experiments>
</comment>
<comment type="interaction">
    <interactant intactId="EBI-8652744">
        <id>Q96IW7</id>
    </interactant>
    <interactant intactId="EBI-12898013">
        <id>Q9NP94</id>
        <label>SLC39A2</label>
    </interactant>
    <organismsDiffer>false</organismsDiffer>
    <experiments>3</experiments>
</comment>
<comment type="interaction">
    <interactant intactId="EBI-8652744">
        <id>Q96IW7</id>
    </interactant>
    <interactant intactId="EBI-741850">
        <id>Q9BZL3</id>
        <label>SMIM3</label>
    </interactant>
    <organismsDiffer>false</organismsDiffer>
    <experiments>3</experiments>
</comment>
<comment type="interaction">
    <interactant intactId="EBI-8652744">
        <id>Q96IW7</id>
    </interactant>
    <interactant intactId="EBI-10819434">
        <id>Q9NPE6</id>
        <label>SPAG4</label>
    </interactant>
    <organismsDiffer>false</organismsDiffer>
    <experiments>3</experiments>
</comment>
<comment type="interaction">
    <interactant intactId="EBI-8652744">
        <id>Q96IW7</id>
    </interactant>
    <interactant intactId="EBI-20117546">
        <id>Q9H169-2</id>
        <label>STMN4</label>
    </interactant>
    <organismsDiffer>false</organismsDiffer>
    <experiments>3</experiments>
</comment>
<comment type="interaction">
    <interactant intactId="EBI-8652744">
        <id>Q96IW7</id>
    </interactant>
    <interactant intactId="EBI-12900395">
        <id>Q8TAV4</id>
        <label>STOML3</label>
    </interactant>
    <organismsDiffer>false</organismsDiffer>
    <experiments>3</experiments>
</comment>
<comment type="interaction">
    <interactant intactId="EBI-8652744">
        <id>Q96IW7</id>
    </interactant>
    <interactant intactId="EBI-712466">
        <id>Q16623</id>
        <label>STX1A</label>
    </interactant>
    <organismsDiffer>false</organismsDiffer>
    <experiments>3</experiments>
</comment>
<comment type="interaction">
    <interactant intactId="EBI-8652744">
        <id>Q96IW7</id>
    </interactant>
    <interactant intactId="EBI-11956649">
        <id>P32856-2</id>
        <label>STX2</label>
    </interactant>
    <organismsDiffer>false</organismsDiffer>
    <experiments>3</experiments>
</comment>
<comment type="interaction">
    <interactant intactId="EBI-8652744">
        <id>Q96IW7</id>
    </interactant>
    <interactant intactId="EBI-744942">
        <id>Q12846</id>
        <label>STX4</label>
    </interactant>
    <organismsDiffer>false</organismsDiffer>
    <experiments>6</experiments>
</comment>
<comment type="interaction">
    <interactant intactId="EBI-8652744">
        <id>Q96IW7</id>
    </interactant>
    <interactant intactId="EBI-18194029">
        <id>Q96L08</id>
        <label>SUSD3</label>
    </interactant>
    <organismsDiffer>false</organismsDiffer>
    <experiments>3</experiments>
</comment>
<comment type="interaction">
    <interactant intactId="EBI-8652744">
        <id>Q96IW7</id>
    </interactant>
    <interactant intactId="EBI-7131783">
        <id>Q8N205</id>
        <label>SYNE4</label>
    </interactant>
    <organismsDiffer>false</organismsDiffer>
    <experiments>3</experiments>
</comment>
<comment type="interaction">
    <interactant intactId="EBI-8652744">
        <id>Q96IW7</id>
    </interactant>
    <interactant intactId="EBI-3934135">
        <id>Q9UP52</id>
        <label>TFR2</label>
    </interactant>
    <organismsDiffer>false</organismsDiffer>
    <experiments>3</experiments>
</comment>
<comment type="interaction">
    <interactant intactId="EBI-8652744">
        <id>Q96IW7</id>
    </interactant>
    <interactant intactId="EBI-12947623">
        <id>Q96MV1</id>
        <label>TLCD4</label>
    </interactant>
    <organismsDiffer>false</organismsDiffer>
    <experiments>3</experiments>
</comment>
<comment type="interaction">
    <interactant intactId="EBI-8652744">
        <id>Q96IW7</id>
    </interactant>
    <interactant intactId="EBI-1056827">
        <id>Q9BVK6</id>
        <label>TMED9</label>
    </interactant>
    <organismsDiffer>false</organismsDiffer>
    <experiments>3</experiments>
</comment>
<comment type="interaction">
    <interactant intactId="EBI-8652744">
        <id>Q96IW7</id>
    </interactant>
    <interactant intactId="EBI-2821497">
        <id>Q9BVX2</id>
        <label>TMEM106C</label>
    </interactant>
    <organismsDiffer>false</organismsDiffer>
    <experiments>3</experiments>
</comment>
<comment type="interaction">
    <interactant intactId="EBI-8652744">
        <id>Q96IW7</id>
    </interactant>
    <interactant intactId="EBI-10276729">
        <id>Q8WUU8</id>
        <label>TMEM174</label>
    </interactant>
    <organismsDiffer>false</organismsDiffer>
    <experiments>3</experiments>
</comment>
<comment type="interaction">
    <interactant intactId="EBI-8652744">
        <id>Q96IW7</id>
    </interactant>
    <interactant intactId="EBI-10982110">
        <id>Q96Q45-2</id>
        <label>TMEM237</label>
    </interactant>
    <organismsDiffer>false</organismsDiffer>
    <experiments>3</experiments>
</comment>
<comment type="interaction">
    <interactant intactId="EBI-8652744">
        <id>Q96IW7</id>
    </interactant>
    <interactant intactId="EBI-3923061">
        <id>Q96B21</id>
        <label>TMEM45B</label>
    </interactant>
    <organismsDiffer>false</organismsDiffer>
    <experiments>3</experiments>
</comment>
<comment type="interaction">
    <interactant intactId="EBI-8652744">
        <id>Q96IW7</id>
    </interactant>
    <interactant intactId="EBI-18178701">
        <id>Q4KMG9</id>
        <label>TMEM52B</label>
    </interactant>
    <organismsDiffer>false</organismsDiffer>
    <experiments>3</experiments>
</comment>
<comment type="interaction">
    <interactant intactId="EBI-8652744">
        <id>Q96IW7</id>
    </interactant>
    <interactant intactId="EBI-12886878">
        <id>Q6P5X7-2</id>
        <label>TMEM71</label>
    </interactant>
    <organismsDiffer>false</organismsDiffer>
    <experiments>3</experiments>
</comment>
<comment type="interaction">
    <interactant intactId="EBI-8652744">
        <id>Q96IW7</id>
    </interactant>
    <interactant intactId="EBI-8649725">
        <id>Q9BSE2</id>
        <label>TMEM79</label>
    </interactant>
    <organismsDiffer>false</organismsDiffer>
    <experiments>7</experiments>
</comment>
<comment type="interaction">
    <interactant intactId="EBI-8652744">
        <id>Q96IW7</id>
    </interactant>
    <interactant intactId="EBI-12345267">
        <id>O15393-2</id>
        <label>TMPRSS2</label>
    </interactant>
    <organismsDiffer>false</organismsDiffer>
    <experiments>3</experiments>
</comment>
<comment type="interaction">
    <interactant intactId="EBI-8652744">
        <id>Q96IW7</id>
    </interactant>
    <interactant intactId="EBI-524131">
        <id>O43557</id>
        <label>TNFSF14</label>
    </interactant>
    <organismsDiffer>false</organismsDiffer>
    <experiments>3</experiments>
</comment>
<comment type="interaction">
    <interactant intactId="EBI-8652744">
        <id>Q96IW7</id>
    </interactant>
    <interactant intactId="EBI-9986117">
        <id>Q96A56</id>
        <label>TP53INP1</label>
    </interactant>
    <organismsDiffer>false</organismsDiffer>
    <experiments>3</experiments>
</comment>
<comment type="interaction">
    <interactant intactId="EBI-8652744">
        <id>Q96IW7</id>
    </interactant>
    <interactant intactId="EBI-17710254">
        <id>Q6PIZ9</id>
        <label>TRAT1</label>
    </interactant>
    <organismsDiffer>false</organismsDiffer>
    <experiments>3</experiments>
</comment>
<comment type="interaction">
    <interactant intactId="EBI-8652744">
        <id>Q96IW7</id>
    </interactant>
    <interactant intactId="EBI-10262539">
        <id>Q8IWR1</id>
        <label>TRIM59</label>
    </interactant>
    <organismsDiffer>false</organismsDiffer>
    <experiments>5</experiments>
</comment>
<comment type="interaction">
    <interactant intactId="EBI-8652744">
        <id>Q96IW7</id>
    </interactant>
    <interactant intactId="EBI-7900408">
        <id>P17643</id>
        <label>TYRP1</label>
    </interactant>
    <organismsDiffer>false</organismsDiffer>
    <experiments>3</experiments>
</comment>
<comment type="interaction">
    <interactant intactId="EBI-8652744">
        <id>Q96IW7</id>
    </interactant>
    <interactant intactId="EBI-3892947">
        <id>Q5T4F4</id>
        <label>ZFYVE27</label>
    </interactant>
    <organismsDiffer>false</organismsDiffer>
    <experiments>3</experiments>
</comment>
<comment type="subcellular location">
    <subcellularLocation>
        <location evidence="1">Endoplasmic reticulum membrane</location>
        <topology evidence="1">Multi-pass membrane protein</topology>
    </subcellularLocation>
</comment>
<comment type="similarity">
    <text evidence="5">Belongs to the synaptobrevin family.</text>
</comment>
<comment type="sequence caution" evidence="5">
    <conflict type="frameshift">
        <sequence resource="EMBL-CDS" id="AAD43013"/>
    </conflict>
</comment>
<organism>
    <name type="scientific">Homo sapiens</name>
    <name type="common">Human</name>
    <dbReference type="NCBI Taxonomy" id="9606"/>
    <lineage>
        <taxon>Eukaryota</taxon>
        <taxon>Metazoa</taxon>
        <taxon>Chordata</taxon>
        <taxon>Craniata</taxon>
        <taxon>Vertebrata</taxon>
        <taxon>Euteleostomi</taxon>
        <taxon>Mammalia</taxon>
        <taxon>Eutheria</taxon>
        <taxon>Euarchontoglires</taxon>
        <taxon>Primates</taxon>
        <taxon>Haplorrhini</taxon>
        <taxon>Catarrhini</taxon>
        <taxon>Hominidae</taxon>
        <taxon>Homo</taxon>
    </lineage>
</organism>